<organism>
    <name type="scientific">Bos taurus</name>
    <name type="common">Bovine</name>
    <dbReference type="NCBI Taxonomy" id="9913"/>
    <lineage>
        <taxon>Eukaryota</taxon>
        <taxon>Metazoa</taxon>
        <taxon>Chordata</taxon>
        <taxon>Craniata</taxon>
        <taxon>Vertebrata</taxon>
        <taxon>Euteleostomi</taxon>
        <taxon>Mammalia</taxon>
        <taxon>Eutheria</taxon>
        <taxon>Laurasiatheria</taxon>
        <taxon>Artiodactyla</taxon>
        <taxon>Ruminantia</taxon>
        <taxon>Pecora</taxon>
        <taxon>Bovidae</taxon>
        <taxon>Bovinae</taxon>
        <taxon>Bos</taxon>
    </lineage>
</organism>
<name>TMEDA_BOVIN</name>
<proteinExistence type="evidence at transcript level"/>
<gene>
    <name type="primary">TMED10</name>
    <name type="synonym">TMP21</name>
</gene>
<evidence type="ECO:0000250" key="1"/>
<evidence type="ECO:0000250" key="2">
    <source>
        <dbReference type="UniProtKB" id="P49755"/>
    </source>
</evidence>
<evidence type="ECO:0000250" key="3">
    <source>
        <dbReference type="UniProtKB" id="Q28735"/>
    </source>
</evidence>
<evidence type="ECO:0000250" key="4">
    <source>
        <dbReference type="UniProtKB" id="Q63584"/>
    </source>
</evidence>
<evidence type="ECO:0000255" key="5"/>
<evidence type="ECO:0000255" key="6">
    <source>
        <dbReference type="PROSITE-ProRule" id="PRU00096"/>
    </source>
</evidence>
<evidence type="ECO:0000305" key="7"/>
<accession>Q5E971</accession>
<accession>A4FV04</accession>
<sequence>MSGSSGPQAQRGPCPFALLLLLLLGPSSVLAISFHLPVNSRKCLREEIHKDLLVTGAYEITDQSGGAGGLRTHLKITDSAGHILYSKEDATKGKFAFTTEDYDMFEVCFESKGTGRIPDQLVILDMKHGVEAKNYEEIAKVEKLKPLEVELRRLEDLSESIVNDFAYMKKREEEMRDTNESTNTRVLYFSIFSMFCLIGLATWQVFYLRRFFKAKKLIE</sequence>
<comment type="function">
    <text evidence="2 3 4">Cargo receptor involved in protein vesicular trafficking and quality control in the endoplasmic reticulum (ER) and Golgi. The p24 protein family is a group of transmembrane proteins that bind coat protein complex I/COPI and coat protein complex II/COPII involved in vesicular trafficking between the membranes. Acts at the lumenal side for incorporation of secretory cargo molecules into transport vesicles and involved in vesicle coat formation at the cytoplasmic side. Mainly functions in the early secretory pathway and cycles between the ER, ER-Golgi intermediate compartment (ERGIC) and Golgi, mediating cargo transport through COPI and COPII-coated vesicles. In COPII vesicle-mediated anterograde transport, involved in the transport of GPI-anchored proteins by acting together with TMED2 as their cargo receptor; the function specifically implies SEC24C and SEC24D of the COPII vesicle coat and lipid raft-like microdomains of the ER (By similarity). Recognizes GPI anchors structural remodeled in the ER by the GPI inositol-deacylase/PGAP1 and the metallophosphoesterase MPPE1/PGAP5 (By similarity). In COPI vesicle-mediated retrograde transport, involved in the biogenesis of COPI vesicles and vesicle coat recruitment. Involved in trafficking of amyloid beta A4 protein and soluble APP-beta release (independent from the modulation of gamma-secretase activity) (By similarity). Involved in the KDELR2-mediated retrograde transport of the toxin A subunit (CTX-A-K63)together with COPI and the COOH terminus of KDELR2 (By similarity). On Golgi membranes, acts as a primary receptor for ARF1-GDP, a GTP-binding protein involved in COPI-vesicle formation. Increases coatomer-dependent GTPase-activating activity of ARFGAP2 which mediates the hydrolysis of ARF1-bound GTP and therefore modulates protein trafficking from the Golgi apparatus. Involved in the exocytic trafficking of G protein-coupled receptors F2LR1/PAR2 (trypsin and tryspin-like enzyme receptor), OPRM1 (opioid receptor) and P2RY4 (UTD and UDP receptor) from the Golgi to the plasma membrane, thus contributing to receptor resensitization. In addition to its cargo receptor activity, may also act as a protein channel after oligomerization, facilitating the post-translational entry of leaderless cytoplasmic cargo into the ERGIC. Involved in the translocation into ERGIC, the vesicle entry and the secretion of leaderless cargos (lacking the secretion signal sequence), including the mature form of interleukin 1/IL-1 family members, the alpha-crystallin B chain HSPB5, the carbohydrate-binding proteins galectin-1/LGALS1 and galectin-3/LGALS3, the microtubule-associated protein Tau/MAPT, and the annexin A1/ANXA1; the translocation process is dependent on cargo protein unfolding and enhanced by chaperones HSP90AB1 and HSP90B1/GRP9. Could also associates with the presenilin-dependent gamma-secretase complex in order to regulate gamma-cleavages of the amyloid beta A4 protein to yield amyloid-beta 40/Abeta40 (By similarity).</text>
</comment>
<comment type="subunit">
    <text evidence="2 3 4">Predominantly dimeric and to a lesser extent monomeric in the ER. Monomer and dimer in ERGIC and cis-Golgi network. Forms homooligomer (via GOLD domain); the assembly is promoted by direct binding with leaderless cargos and may form a protein channel that facilitates cargo entry into the ERGIC. Forms heterooligomeric complexes with other members of the p24 family such as TMED2, TMED7 and TMED9. Interacts (via GOLD domain) with TMED2 (via GOLD domain); the complex is required for export of TMED10 from the ER to the cis-Golgi network; the complex is proposed to be involved in cis-Golgi network dynamics and / or biogenesis. Associates with the COPI vesicle coat subunits (coatomer) (By similarity). Tetramerization of the cytoplasmic domain at the Golgi membrane in vitro; the complex is proposed to interact with COPI coatomer and induce budding of the vesicles (By similarity). Interacts with COPG1; the interaction involves TMED10 homodimer. Interacts with ARF1 (GDP-bound); the interaction probably involves a TMED10 oligomer. Interacts with SEC23A, SEC24B, SEC24C and SEC24D components of the coat protein complex II/COPII, indicative of an association of TMED10 with the COPII vesicle coat. Interacts with CD59. Interacts with MPPE1/PGAP5; the complex might recruit and sort GPI-anchored proteins to the ER-exit site, or the interaction might lead to recycling of PGAP5 between the ER and the Golgi. Interacts with F2LR1/PAR2 (By similarity). Interacts with KDELR2/ERD2; the interaction is disrupted by KDELR2 ligand (By similarity). Found in a complex composed at least of SURF4, TMED2 and TMED10. Associates with the presenilin-dependent gamma-secretase complex. Interacts with STX17; the interaction is direct. Interacts with IL-1; the interaction is direct. Interacts with RAB21 (active GTP-bound form); the interaction is indirect and regulates TMED10 abundance and localization at the Golgi (By similarity).</text>
</comment>
<comment type="subcellular location">
    <subcellularLocation>
        <location evidence="2">Endoplasmic reticulum membrane</location>
        <topology evidence="5">Single-pass type I membrane protein</topology>
    </subcellularLocation>
    <subcellularLocation>
        <location evidence="2">Endoplasmic reticulum-Golgi intermediate compartment membrane</location>
        <topology evidence="5">Single-pass type I membrane protein</topology>
    </subcellularLocation>
    <subcellularLocation>
        <location evidence="2">Golgi apparatus membrane</location>
        <topology evidence="5">Single-pass type I membrane protein</topology>
    </subcellularLocation>
    <subcellularLocation>
        <location evidence="2">Golgi apparatus</location>
        <location evidence="2">cis-Golgi network membrane</location>
        <topology evidence="5">Single-pass type I membrane protein</topology>
    </subcellularLocation>
    <subcellularLocation>
        <location evidence="4">Golgi apparatus</location>
        <location evidence="4">trans-Golgi network membrane</location>
        <topology evidence="5">Single-pass type I membrane protein</topology>
    </subcellularLocation>
    <subcellularLocation>
        <location evidence="2">Cytoplasmic vesicle</location>
        <location evidence="2">Secretory vesicle membrane</location>
        <topology evidence="5">Single-pass type I membrane protein</topology>
    </subcellularLocation>
    <subcellularLocation>
        <location evidence="4">Cell membrane</location>
        <topology evidence="5">Single-pass type I membrane protein</topology>
    </subcellularLocation>
    <subcellularLocation>
        <location evidence="2">Melanosome</location>
    </subcellularLocation>
</comment>
<comment type="domain">
    <text evidence="2">The GOLD domain is required for proper p24 heterooligomeric complex formation and efficient transport of GPI-anchored proteins.</text>
</comment>
<comment type="domain">
    <text evidence="4">The lumenal domain mediates localization to the plasma membrane by partially overriding the ER retention by the cytoplasmic domain.</text>
</comment>
<comment type="miscellaneous">
    <text evidence="2">Ectopic expression of TMED10 alone does not result in its proper cis-Golgi network localization. Interaction of TMED10 with TMED2 is both necessary and sufficient for transport of the couple to the cis-Golgi network, and TMED3 and/or TMED9 contribute to facilitating the process.</text>
</comment>
<comment type="similarity">
    <text evidence="7">Belongs to the EMP24/GP25L family.</text>
</comment>
<reference key="1">
    <citation type="journal article" date="2005" name="BMC Genomics">
        <title>Characterization of 954 bovine full-CDS cDNA sequences.</title>
        <authorList>
            <person name="Harhay G.P."/>
            <person name="Sonstegard T.S."/>
            <person name="Keele J.W."/>
            <person name="Heaton M.P."/>
            <person name="Clawson M.L."/>
            <person name="Snelling W.M."/>
            <person name="Wiedmann R.T."/>
            <person name="Van Tassell C.P."/>
            <person name="Smith T.P.L."/>
        </authorList>
    </citation>
    <scope>NUCLEOTIDE SEQUENCE [LARGE SCALE MRNA]</scope>
</reference>
<reference key="2">
    <citation type="submission" date="2006-09" db="EMBL/GenBank/DDBJ databases">
        <authorList>
            <consortium name="NIH - Mammalian Gene Collection (MGC) project"/>
        </authorList>
    </citation>
    <scope>NUCLEOTIDE SEQUENCE [LARGE SCALE MRNA]</scope>
    <source>
        <strain>Hereford</strain>
        <tissue>Fetal cerebellum</tissue>
    </source>
</reference>
<dbReference type="EMBL" id="BT021049">
    <property type="protein sequence ID" value="AAX09066.1"/>
    <property type="molecule type" value="mRNA"/>
</dbReference>
<dbReference type="EMBL" id="BC123529">
    <property type="protein sequence ID" value="AAI23530.1"/>
    <property type="molecule type" value="mRNA"/>
</dbReference>
<dbReference type="RefSeq" id="NP_001035639.1">
    <property type="nucleotide sequence ID" value="NM_001040549.2"/>
</dbReference>
<dbReference type="RefSeq" id="XP_024853357.1">
    <property type="nucleotide sequence ID" value="XM_024997589.2"/>
</dbReference>
<dbReference type="SMR" id="Q5E971"/>
<dbReference type="FunCoup" id="Q5E971">
    <property type="interactions" value="3673"/>
</dbReference>
<dbReference type="IntAct" id="Q5E971">
    <property type="interactions" value="1"/>
</dbReference>
<dbReference type="MINT" id="Q5E971"/>
<dbReference type="STRING" id="9913.ENSBTAP00000007481"/>
<dbReference type="GlyCosmos" id="Q5E971">
    <property type="glycosylation" value="1 site, No reported glycans"/>
</dbReference>
<dbReference type="GlyGen" id="Q5E971">
    <property type="glycosylation" value="1 site"/>
</dbReference>
<dbReference type="PaxDb" id="9913-ENSBTAP00000007481"/>
<dbReference type="PeptideAtlas" id="Q5E971"/>
<dbReference type="Ensembl" id="ENSBTAT00000007481.7">
    <property type="protein sequence ID" value="ENSBTAP00000007481.6"/>
    <property type="gene ID" value="ENSBTAG00000005694.7"/>
</dbReference>
<dbReference type="GeneID" id="529761"/>
<dbReference type="KEGG" id="bta:529761"/>
<dbReference type="CTD" id="10972"/>
<dbReference type="VEuPathDB" id="HostDB:ENSBTAG00000005694"/>
<dbReference type="VGNC" id="VGNC:35935">
    <property type="gene designation" value="TMED10"/>
</dbReference>
<dbReference type="eggNOG" id="KOG1691">
    <property type="taxonomic scope" value="Eukaryota"/>
</dbReference>
<dbReference type="GeneTree" id="ENSGT00550000074954"/>
<dbReference type="InParanoid" id="Q5E971"/>
<dbReference type="OMA" id="DVFEACF"/>
<dbReference type="OrthoDB" id="759142at2759"/>
<dbReference type="Reactome" id="R-BTA-204005">
    <property type="pathway name" value="COPII-mediated vesicle transport"/>
</dbReference>
<dbReference type="Reactome" id="R-BTA-5694530">
    <property type="pathway name" value="Cargo concentration in the ER"/>
</dbReference>
<dbReference type="Reactome" id="R-BTA-6807878">
    <property type="pathway name" value="COPI-mediated anterograde transport"/>
</dbReference>
<dbReference type="Reactome" id="R-BTA-6811434">
    <property type="pathway name" value="COPI-dependent Golgi-to-ER retrograde traffic"/>
</dbReference>
<dbReference type="Proteomes" id="UP000009136">
    <property type="component" value="Chromosome 10"/>
</dbReference>
<dbReference type="Bgee" id="ENSBTAG00000005694">
    <property type="expression patterns" value="Expressed in spermatocyte and 109 other cell types or tissues"/>
</dbReference>
<dbReference type="GO" id="GO:0030137">
    <property type="term" value="C:COPI-coated vesicle"/>
    <property type="evidence" value="ECO:0000250"/>
    <property type="project" value="UniProtKB"/>
</dbReference>
<dbReference type="GO" id="GO:0030134">
    <property type="term" value="C:COPII-coated ER to Golgi transport vesicle"/>
    <property type="evidence" value="ECO:0000318"/>
    <property type="project" value="GO_Central"/>
</dbReference>
<dbReference type="GO" id="GO:0005783">
    <property type="term" value="C:endoplasmic reticulum"/>
    <property type="evidence" value="ECO:0000318"/>
    <property type="project" value="GO_Central"/>
</dbReference>
<dbReference type="GO" id="GO:0005789">
    <property type="term" value="C:endoplasmic reticulum membrane"/>
    <property type="evidence" value="ECO:0007669"/>
    <property type="project" value="UniProtKB-SubCell"/>
</dbReference>
<dbReference type="GO" id="GO:0005793">
    <property type="term" value="C:endoplasmic reticulum-Golgi intermediate compartment"/>
    <property type="evidence" value="ECO:0000250"/>
    <property type="project" value="UniProtKB"/>
</dbReference>
<dbReference type="GO" id="GO:0033116">
    <property type="term" value="C:endoplasmic reticulum-Golgi intermediate compartment membrane"/>
    <property type="evidence" value="ECO:0007669"/>
    <property type="project" value="UniProtKB-SubCell"/>
</dbReference>
<dbReference type="GO" id="GO:0070765">
    <property type="term" value="C:gamma-secretase complex"/>
    <property type="evidence" value="ECO:0000250"/>
    <property type="project" value="UniProtKB"/>
</dbReference>
<dbReference type="GO" id="GO:0005794">
    <property type="term" value="C:Golgi apparatus"/>
    <property type="evidence" value="ECO:0000318"/>
    <property type="project" value="GO_Central"/>
</dbReference>
<dbReference type="GO" id="GO:0000139">
    <property type="term" value="C:Golgi membrane"/>
    <property type="evidence" value="ECO:0007669"/>
    <property type="project" value="UniProtKB-SubCell"/>
</dbReference>
<dbReference type="GO" id="GO:0042470">
    <property type="term" value="C:melanosome"/>
    <property type="evidence" value="ECO:0007669"/>
    <property type="project" value="UniProtKB-SubCell"/>
</dbReference>
<dbReference type="GO" id="GO:0005886">
    <property type="term" value="C:plasma membrane"/>
    <property type="evidence" value="ECO:0000250"/>
    <property type="project" value="UniProtKB"/>
</dbReference>
<dbReference type="GO" id="GO:0030667">
    <property type="term" value="C:secretory granule membrane"/>
    <property type="evidence" value="ECO:0000250"/>
    <property type="project" value="UniProtKB"/>
</dbReference>
<dbReference type="GO" id="GO:0030140">
    <property type="term" value="C:trans-Golgi network transport vesicle"/>
    <property type="evidence" value="ECO:0000250"/>
    <property type="project" value="UniProtKB"/>
</dbReference>
<dbReference type="GO" id="GO:0030658">
    <property type="term" value="C:transport vesicle membrane"/>
    <property type="evidence" value="ECO:0007669"/>
    <property type="project" value="UniProtKB-SubCell"/>
</dbReference>
<dbReference type="GO" id="GO:0042589">
    <property type="term" value="C:zymogen granule membrane"/>
    <property type="evidence" value="ECO:0007669"/>
    <property type="project" value="Ensembl"/>
</dbReference>
<dbReference type="GO" id="GO:0008320">
    <property type="term" value="F:protein transmembrane transporter activity"/>
    <property type="evidence" value="ECO:0000250"/>
    <property type="project" value="UniProtKB"/>
</dbReference>
<dbReference type="GO" id="GO:0019905">
    <property type="term" value="F:syntaxin binding"/>
    <property type="evidence" value="ECO:0007669"/>
    <property type="project" value="Ensembl"/>
</dbReference>
<dbReference type="GO" id="GO:0035964">
    <property type="term" value="P:COPI-coated vesicle budding"/>
    <property type="evidence" value="ECO:0000250"/>
    <property type="project" value="UniProtKB"/>
</dbReference>
<dbReference type="GO" id="GO:0106273">
    <property type="term" value="P:cytosol to ERGIC protein transport"/>
    <property type="evidence" value="ECO:0000250"/>
    <property type="project" value="UniProtKB"/>
</dbReference>
<dbReference type="GO" id="GO:0006888">
    <property type="term" value="P:endoplasmic reticulum to Golgi vesicle-mediated transport"/>
    <property type="evidence" value="ECO:0000318"/>
    <property type="project" value="GO_Central"/>
</dbReference>
<dbReference type="GO" id="GO:0007030">
    <property type="term" value="P:Golgi organization"/>
    <property type="evidence" value="ECO:0000318"/>
    <property type="project" value="GO_Central"/>
</dbReference>
<dbReference type="GO" id="GO:0006886">
    <property type="term" value="P:intracellular protein transport"/>
    <property type="evidence" value="ECO:0000318"/>
    <property type="project" value="GO_Central"/>
</dbReference>
<dbReference type="GO" id="GO:0032732">
    <property type="term" value="P:positive regulation of interleukin-1 production"/>
    <property type="evidence" value="ECO:0000250"/>
    <property type="project" value="UniProtKB"/>
</dbReference>
<dbReference type="GO" id="GO:0050714">
    <property type="term" value="P:positive regulation of protein secretion"/>
    <property type="evidence" value="ECO:0000250"/>
    <property type="project" value="UniProtKB"/>
</dbReference>
<dbReference type="GO" id="GO:0106272">
    <property type="term" value="P:protein localization to ERGIC"/>
    <property type="evidence" value="ECO:0000250"/>
    <property type="project" value="UniProtKB"/>
</dbReference>
<dbReference type="GO" id="GO:0045055">
    <property type="term" value="P:regulated exocytosis"/>
    <property type="evidence" value="ECO:0007669"/>
    <property type="project" value="Ensembl"/>
</dbReference>
<dbReference type="GO" id="GO:1902003">
    <property type="term" value="P:regulation of amyloid-beta formation"/>
    <property type="evidence" value="ECO:0000250"/>
    <property type="project" value="UniProtKB"/>
</dbReference>
<dbReference type="GO" id="GO:0006890">
    <property type="term" value="P:retrograde vesicle-mediated transport, Golgi to endoplasmic reticulum"/>
    <property type="evidence" value="ECO:0000250"/>
    <property type="project" value="UniProtKB"/>
</dbReference>
<dbReference type="InterPro" id="IPR015720">
    <property type="entry name" value="Emp24-like"/>
</dbReference>
<dbReference type="InterPro" id="IPR009038">
    <property type="entry name" value="GOLD_dom"/>
</dbReference>
<dbReference type="PANTHER" id="PTHR22811">
    <property type="entry name" value="TRANSMEMBRANE EMP24 DOMAIN-CONTAINING PROTEIN"/>
    <property type="match status" value="1"/>
</dbReference>
<dbReference type="Pfam" id="PF01105">
    <property type="entry name" value="EMP24_GP25L"/>
    <property type="match status" value="1"/>
</dbReference>
<dbReference type="SMART" id="SM01190">
    <property type="entry name" value="EMP24_GP25L"/>
    <property type="match status" value="1"/>
</dbReference>
<dbReference type="PROSITE" id="PS50866">
    <property type="entry name" value="GOLD"/>
    <property type="match status" value="1"/>
</dbReference>
<protein>
    <recommendedName>
        <fullName>Transmembrane emp24 domain-containing protein 10</fullName>
        <shortName>Protein TMED10</shortName>
    </recommendedName>
    <alternativeName>
        <fullName>21 kDa transmembrane-trafficking protein</fullName>
    </alternativeName>
    <alternativeName>
        <fullName>Transmembrane protein Tmp21</fullName>
    </alternativeName>
    <alternativeName>
        <fullName>p24 family protein delta-1</fullName>
        <shortName>p24delta1</shortName>
    </alternativeName>
</protein>
<feature type="signal peptide" evidence="1">
    <location>
        <begin position="1"/>
        <end position="31"/>
    </location>
</feature>
<feature type="chain" id="PRO_0000010398" description="Transmembrane emp24 domain-containing protein 10">
    <location>
        <begin position="32"/>
        <end position="219"/>
    </location>
</feature>
<feature type="topological domain" description="Lumenal" evidence="7">
    <location>
        <begin position="32"/>
        <end position="185"/>
    </location>
</feature>
<feature type="transmembrane region" description="Helical" evidence="5">
    <location>
        <begin position="186"/>
        <end position="206"/>
    </location>
</feature>
<feature type="topological domain" description="Cytoplasmic" evidence="7">
    <location>
        <begin position="207"/>
        <end position="219"/>
    </location>
</feature>
<feature type="domain" description="GOLD" evidence="6">
    <location>
        <begin position="41"/>
        <end position="193"/>
    </location>
</feature>
<feature type="region of interest" description="Required for interaction with STX17" evidence="1">
    <location>
        <begin position="1"/>
        <end position="142"/>
    </location>
</feature>
<feature type="region of interest" description="Required for TMED10 and TMED2 cis-Golgi network localization" evidence="1">
    <location>
        <begin position="147"/>
        <end position="178"/>
    </location>
</feature>
<feature type="region of interest" description="Interaction with COPG1" evidence="1">
    <location>
        <begin position="204"/>
        <end position="219"/>
    </location>
</feature>
<feature type="region of interest" description="Interaction with ARF1 and IL1B" evidence="2">
    <location>
        <begin position="207"/>
        <end position="219"/>
    </location>
</feature>
<feature type="short sequence motif" description="COPI vesicle coat-binding" evidence="5">
    <location>
        <begin position="211"/>
        <end position="219"/>
    </location>
</feature>
<feature type="short sequence motif" description="COPII vesicle coat-binding" evidence="5">
    <location>
        <begin position="211"/>
        <end position="212"/>
    </location>
</feature>
<feature type="modified residue" description="Dimethylated arginine" evidence="4">
    <location>
        <position position="171"/>
    </location>
</feature>
<feature type="modified residue" description="Dimethylated arginine" evidence="4">
    <location>
        <position position="176"/>
    </location>
</feature>
<feature type="glycosylation site" description="N-linked (GlcNAc...) asparagine" evidence="5">
    <location>
        <position position="179"/>
    </location>
</feature>
<keyword id="KW-1003">Cell membrane</keyword>
<keyword id="KW-0968">Cytoplasmic vesicle</keyword>
<keyword id="KW-0256">Endoplasmic reticulum</keyword>
<keyword id="KW-0931">ER-Golgi transport</keyword>
<keyword id="KW-0325">Glycoprotein</keyword>
<keyword id="KW-0333">Golgi apparatus</keyword>
<keyword id="KW-0472">Membrane</keyword>
<keyword id="KW-0488">Methylation</keyword>
<keyword id="KW-0653">Protein transport</keyword>
<keyword id="KW-1185">Reference proteome</keyword>
<keyword id="KW-0732">Signal</keyword>
<keyword id="KW-0812">Transmembrane</keyword>
<keyword id="KW-1133">Transmembrane helix</keyword>
<keyword id="KW-0813">Transport</keyword>